<name>GCST_PSET1</name>
<feature type="chain" id="PRO_1000047693" description="Aminomethyltransferase">
    <location>
        <begin position="1"/>
        <end position="360"/>
    </location>
</feature>
<keyword id="KW-0032">Aminotransferase</keyword>
<keyword id="KW-1185">Reference proteome</keyword>
<keyword id="KW-0808">Transferase</keyword>
<sequence>MTSKTVLYAKHLEAGAKMVDFHGWEMPINYGSQIEEHNAVRNDAGMFDVSHMTIVDIQGEQAQAFLQKLVANDVAKLTVPGKALYTPMLNEQGGVIDDLIIYFFSNTSYRLVVNSATREKDLAHLAKISADFAVTVTERNEFGMIAVQGPNAKAKTATLLTAEQNAAIEGMKPFFGVQTGDLFIATTGYTGEDGYEIVVPKEQAADLWQQLLDAGVAPAGLGARDTLRLEAGMNLYGLDMDESVSPLAANMAWTIAWEPQSRDFIGRDVLVQQRADQSTDKQVGLVLEEKGILRSGSKVIVDGGEGVITSGTFSPTLGYSVALARVPRSTGDTAQVEMRKKLVTVKVVKPGFVRNGKSIL</sequence>
<proteinExistence type="inferred from homology"/>
<dbReference type="EC" id="2.1.2.10" evidence="1"/>
<dbReference type="EMBL" id="CR954246">
    <property type="protein sequence ID" value="CAI87523.1"/>
    <property type="molecule type" value="Genomic_DNA"/>
</dbReference>
<dbReference type="SMR" id="Q3IFV9"/>
<dbReference type="STRING" id="326442.PSHAa2475"/>
<dbReference type="KEGG" id="pha:PSHAa2475"/>
<dbReference type="PATRIC" id="fig|326442.8.peg.2385"/>
<dbReference type="eggNOG" id="COG0404">
    <property type="taxonomic scope" value="Bacteria"/>
</dbReference>
<dbReference type="HOGENOM" id="CLU_007884_10_2_6"/>
<dbReference type="BioCyc" id="PHAL326442:PSHA_RS12185-MONOMER"/>
<dbReference type="Proteomes" id="UP000006843">
    <property type="component" value="Chromosome I"/>
</dbReference>
<dbReference type="GO" id="GO:0005829">
    <property type="term" value="C:cytosol"/>
    <property type="evidence" value="ECO:0007669"/>
    <property type="project" value="TreeGrafter"/>
</dbReference>
<dbReference type="GO" id="GO:0005960">
    <property type="term" value="C:glycine cleavage complex"/>
    <property type="evidence" value="ECO:0007669"/>
    <property type="project" value="InterPro"/>
</dbReference>
<dbReference type="GO" id="GO:0004047">
    <property type="term" value="F:aminomethyltransferase activity"/>
    <property type="evidence" value="ECO:0007669"/>
    <property type="project" value="UniProtKB-UniRule"/>
</dbReference>
<dbReference type="GO" id="GO:0008483">
    <property type="term" value="F:transaminase activity"/>
    <property type="evidence" value="ECO:0007669"/>
    <property type="project" value="UniProtKB-KW"/>
</dbReference>
<dbReference type="GO" id="GO:0019464">
    <property type="term" value="P:glycine decarboxylation via glycine cleavage system"/>
    <property type="evidence" value="ECO:0007669"/>
    <property type="project" value="UniProtKB-UniRule"/>
</dbReference>
<dbReference type="FunFam" id="2.40.30.110:FF:000001">
    <property type="entry name" value="Aminomethyltransferase"/>
    <property type="match status" value="1"/>
</dbReference>
<dbReference type="FunFam" id="3.30.70.1400:FF:000001">
    <property type="entry name" value="Aminomethyltransferase"/>
    <property type="match status" value="1"/>
</dbReference>
<dbReference type="FunFam" id="4.10.1250.10:FF:000001">
    <property type="entry name" value="Aminomethyltransferase"/>
    <property type="match status" value="1"/>
</dbReference>
<dbReference type="Gene3D" id="2.40.30.110">
    <property type="entry name" value="Aminomethyltransferase beta-barrel domains"/>
    <property type="match status" value="1"/>
</dbReference>
<dbReference type="Gene3D" id="3.30.70.1400">
    <property type="entry name" value="Aminomethyltransferase beta-barrel domains"/>
    <property type="match status" value="1"/>
</dbReference>
<dbReference type="Gene3D" id="4.10.1250.10">
    <property type="entry name" value="Aminomethyltransferase fragment"/>
    <property type="match status" value="1"/>
</dbReference>
<dbReference type="Gene3D" id="3.30.1360.120">
    <property type="entry name" value="Probable tRNA modification gtpase trme, domain 1"/>
    <property type="match status" value="1"/>
</dbReference>
<dbReference type="HAMAP" id="MF_00259">
    <property type="entry name" value="GcvT"/>
    <property type="match status" value="1"/>
</dbReference>
<dbReference type="InterPro" id="IPR006223">
    <property type="entry name" value="GCS_T"/>
</dbReference>
<dbReference type="InterPro" id="IPR022903">
    <property type="entry name" value="GCS_T_bac"/>
</dbReference>
<dbReference type="InterPro" id="IPR013977">
    <property type="entry name" value="GCST_C"/>
</dbReference>
<dbReference type="InterPro" id="IPR006222">
    <property type="entry name" value="GCV_T_N"/>
</dbReference>
<dbReference type="InterPro" id="IPR028896">
    <property type="entry name" value="GcvT/YgfZ/DmdA"/>
</dbReference>
<dbReference type="InterPro" id="IPR029043">
    <property type="entry name" value="GcvT/YgfZ_C"/>
</dbReference>
<dbReference type="InterPro" id="IPR027266">
    <property type="entry name" value="TrmE/GcvT_dom1"/>
</dbReference>
<dbReference type="NCBIfam" id="TIGR00528">
    <property type="entry name" value="gcvT"/>
    <property type="match status" value="1"/>
</dbReference>
<dbReference type="NCBIfam" id="NF001567">
    <property type="entry name" value="PRK00389.1"/>
    <property type="match status" value="1"/>
</dbReference>
<dbReference type="PANTHER" id="PTHR43757">
    <property type="entry name" value="AMINOMETHYLTRANSFERASE"/>
    <property type="match status" value="1"/>
</dbReference>
<dbReference type="PANTHER" id="PTHR43757:SF2">
    <property type="entry name" value="AMINOMETHYLTRANSFERASE, MITOCHONDRIAL"/>
    <property type="match status" value="1"/>
</dbReference>
<dbReference type="Pfam" id="PF01571">
    <property type="entry name" value="GCV_T"/>
    <property type="match status" value="1"/>
</dbReference>
<dbReference type="Pfam" id="PF08669">
    <property type="entry name" value="GCV_T_C"/>
    <property type="match status" value="1"/>
</dbReference>
<dbReference type="PIRSF" id="PIRSF006487">
    <property type="entry name" value="GcvT"/>
    <property type="match status" value="1"/>
</dbReference>
<dbReference type="SUPFAM" id="SSF101790">
    <property type="entry name" value="Aminomethyltransferase beta-barrel domain"/>
    <property type="match status" value="1"/>
</dbReference>
<dbReference type="SUPFAM" id="SSF103025">
    <property type="entry name" value="Folate-binding domain"/>
    <property type="match status" value="1"/>
</dbReference>
<accession>Q3IFV9</accession>
<organism>
    <name type="scientific">Pseudoalteromonas translucida (strain TAC 125)</name>
    <dbReference type="NCBI Taxonomy" id="326442"/>
    <lineage>
        <taxon>Bacteria</taxon>
        <taxon>Pseudomonadati</taxon>
        <taxon>Pseudomonadota</taxon>
        <taxon>Gammaproteobacteria</taxon>
        <taxon>Alteromonadales</taxon>
        <taxon>Pseudoalteromonadaceae</taxon>
        <taxon>Pseudoalteromonas</taxon>
    </lineage>
</organism>
<reference key="1">
    <citation type="journal article" date="2005" name="Genome Res.">
        <title>Coping with cold: the genome of the versatile marine Antarctica bacterium Pseudoalteromonas haloplanktis TAC125.</title>
        <authorList>
            <person name="Medigue C."/>
            <person name="Krin E."/>
            <person name="Pascal G."/>
            <person name="Barbe V."/>
            <person name="Bernsel A."/>
            <person name="Bertin P.N."/>
            <person name="Cheung F."/>
            <person name="Cruveiller S."/>
            <person name="D'Amico S."/>
            <person name="Duilio A."/>
            <person name="Fang G."/>
            <person name="Feller G."/>
            <person name="Ho C."/>
            <person name="Mangenot S."/>
            <person name="Marino G."/>
            <person name="Nilsson J."/>
            <person name="Parrilli E."/>
            <person name="Rocha E.P.C."/>
            <person name="Rouy Z."/>
            <person name="Sekowska A."/>
            <person name="Tutino M.L."/>
            <person name="Vallenet D."/>
            <person name="von Heijne G."/>
            <person name="Danchin A."/>
        </authorList>
    </citation>
    <scope>NUCLEOTIDE SEQUENCE [LARGE SCALE GENOMIC DNA]</scope>
    <source>
        <strain>TAC 125</strain>
    </source>
</reference>
<comment type="function">
    <text evidence="1">The glycine cleavage system catalyzes the degradation of glycine.</text>
</comment>
<comment type="catalytic activity">
    <reaction evidence="1">
        <text>N(6)-[(R)-S(8)-aminomethyldihydrolipoyl]-L-lysyl-[protein] + (6S)-5,6,7,8-tetrahydrofolate = N(6)-[(R)-dihydrolipoyl]-L-lysyl-[protein] + (6R)-5,10-methylene-5,6,7,8-tetrahydrofolate + NH4(+)</text>
        <dbReference type="Rhea" id="RHEA:16945"/>
        <dbReference type="Rhea" id="RHEA-COMP:10475"/>
        <dbReference type="Rhea" id="RHEA-COMP:10492"/>
        <dbReference type="ChEBI" id="CHEBI:15636"/>
        <dbReference type="ChEBI" id="CHEBI:28938"/>
        <dbReference type="ChEBI" id="CHEBI:57453"/>
        <dbReference type="ChEBI" id="CHEBI:83100"/>
        <dbReference type="ChEBI" id="CHEBI:83143"/>
        <dbReference type="EC" id="2.1.2.10"/>
    </reaction>
</comment>
<comment type="subunit">
    <text evidence="1">The glycine cleavage system is composed of four proteins: P, T, L and H.</text>
</comment>
<comment type="similarity">
    <text evidence="1">Belongs to the GcvT family.</text>
</comment>
<protein>
    <recommendedName>
        <fullName evidence="1">Aminomethyltransferase</fullName>
        <ecNumber evidence="1">2.1.2.10</ecNumber>
    </recommendedName>
    <alternativeName>
        <fullName evidence="1">Glycine cleavage system T protein</fullName>
    </alternativeName>
</protein>
<gene>
    <name evidence="1" type="primary">gcvT</name>
    <name type="ordered locus">PSHAa2475</name>
</gene>
<evidence type="ECO:0000255" key="1">
    <source>
        <dbReference type="HAMAP-Rule" id="MF_00259"/>
    </source>
</evidence>